<gene>
    <name evidence="1" type="primary">rbcL</name>
    <name type="ordered locus">MM_1249</name>
</gene>
<name>RBL_METMA</name>
<dbReference type="EC" id="4.1.1.39" evidence="1"/>
<dbReference type="EMBL" id="AE008384">
    <property type="protein sequence ID" value="AAM30945.1"/>
    <property type="molecule type" value="Genomic_DNA"/>
</dbReference>
<dbReference type="RefSeq" id="WP_011033198.1">
    <property type="nucleotide sequence ID" value="NC_003901.1"/>
</dbReference>
<dbReference type="SMR" id="Q8PXG9"/>
<dbReference type="GeneID" id="82160283"/>
<dbReference type="KEGG" id="mma:MM_1249"/>
<dbReference type="PATRIC" id="fig|192952.21.peg.1455"/>
<dbReference type="eggNOG" id="arCOG04443">
    <property type="taxonomic scope" value="Archaea"/>
</dbReference>
<dbReference type="HOGENOM" id="CLU_031450_3_1_2"/>
<dbReference type="Proteomes" id="UP000000595">
    <property type="component" value="Chromosome"/>
</dbReference>
<dbReference type="GO" id="GO:0000287">
    <property type="term" value="F:magnesium ion binding"/>
    <property type="evidence" value="ECO:0007669"/>
    <property type="project" value="UniProtKB-UniRule"/>
</dbReference>
<dbReference type="GO" id="GO:0016491">
    <property type="term" value="F:oxidoreductase activity"/>
    <property type="evidence" value="ECO:0007669"/>
    <property type="project" value="UniProtKB-KW"/>
</dbReference>
<dbReference type="GO" id="GO:0016984">
    <property type="term" value="F:ribulose-bisphosphate carboxylase activity"/>
    <property type="evidence" value="ECO:0007669"/>
    <property type="project" value="UniProtKB-UniRule"/>
</dbReference>
<dbReference type="GO" id="GO:0006196">
    <property type="term" value="P:AMP catabolic process"/>
    <property type="evidence" value="ECO:0007669"/>
    <property type="project" value="UniProtKB-UniRule"/>
</dbReference>
<dbReference type="GO" id="GO:0015977">
    <property type="term" value="P:carbon fixation"/>
    <property type="evidence" value="ECO:0007669"/>
    <property type="project" value="UniProtKB-KW"/>
</dbReference>
<dbReference type="CDD" id="cd08213">
    <property type="entry name" value="RuBisCO_large_III"/>
    <property type="match status" value="1"/>
</dbReference>
<dbReference type="Gene3D" id="3.20.20.110">
    <property type="entry name" value="Ribulose bisphosphate carboxylase, large subunit, C-terminal domain"/>
    <property type="match status" value="1"/>
</dbReference>
<dbReference type="Gene3D" id="3.30.70.150">
    <property type="entry name" value="RuBisCO large subunit, N-terminal domain"/>
    <property type="match status" value="1"/>
</dbReference>
<dbReference type="HAMAP" id="MF_01133">
    <property type="entry name" value="RuBisCO_L_type3"/>
    <property type="match status" value="1"/>
</dbReference>
<dbReference type="InterPro" id="IPR033966">
    <property type="entry name" value="RuBisCO"/>
</dbReference>
<dbReference type="InterPro" id="IPR017712">
    <property type="entry name" value="RuBisCO_III"/>
</dbReference>
<dbReference type="InterPro" id="IPR000685">
    <property type="entry name" value="RuBisCO_lsu_C"/>
</dbReference>
<dbReference type="InterPro" id="IPR036376">
    <property type="entry name" value="RuBisCO_lsu_C_sf"/>
</dbReference>
<dbReference type="InterPro" id="IPR017443">
    <property type="entry name" value="RuBisCO_lsu_fd_N"/>
</dbReference>
<dbReference type="InterPro" id="IPR036422">
    <property type="entry name" value="RuBisCO_lsu_N_sf"/>
</dbReference>
<dbReference type="NCBIfam" id="NF003252">
    <property type="entry name" value="PRK04208.1"/>
    <property type="match status" value="1"/>
</dbReference>
<dbReference type="NCBIfam" id="TIGR03326">
    <property type="entry name" value="rubisco_III"/>
    <property type="match status" value="1"/>
</dbReference>
<dbReference type="PANTHER" id="PTHR42704">
    <property type="entry name" value="RIBULOSE BISPHOSPHATE CARBOXYLASE"/>
    <property type="match status" value="1"/>
</dbReference>
<dbReference type="PANTHER" id="PTHR42704:SF17">
    <property type="entry name" value="RIBULOSE BISPHOSPHATE CARBOXYLASE LARGE CHAIN"/>
    <property type="match status" value="1"/>
</dbReference>
<dbReference type="Pfam" id="PF00016">
    <property type="entry name" value="RuBisCO_large"/>
    <property type="match status" value="1"/>
</dbReference>
<dbReference type="Pfam" id="PF02788">
    <property type="entry name" value="RuBisCO_large_N"/>
    <property type="match status" value="1"/>
</dbReference>
<dbReference type="SFLD" id="SFLDS00014">
    <property type="entry name" value="RuBisCO"/>
    <property type="match status" value="1"/>
</dbReference>
<dbReference type="SFLD" id="SFLDG00301">
    <property type="entry name" value="RuBisCO-like_proteins"/>
    <property type="match status" value="1"/>
</dbReference>
<dbReference type="SUPFAM" id="SSF51649">
    <property type="entry name" value="RuBisCo, C-terminal domain"/>
    <property type="match status" value="1"/>
</dbReference>
<dbReference type="SUPFAM" id="SSF54966">
    <property type="entry name" value="RuBisCO, large subunit, small (N-terminal) domain"/>
    <property type="match status" value="1"/>
</dbReference>
<accession>Q8PXG9</accession>
<protein>
    <recommendedName>
        <fullName evidence="1">Ribulose bisphosphate carboxylase</fullName>
        <shortName evidence="1">RuBisCO</shortName>
        <ecNumber evidence="1">4.1.1.39</ecNumber>
    </recommendedName>
</protein>
<feature type="chain" id="PRO_0000062674" description="Ribulose bisphosphate carboxylase">
    <location>
        <begin position="1"/>
        <end position="428"/>
    </location>
</feature>
<feature type="active site" description="Proton acceptor" evidence="1">
    <location>
        <position position="151"/>
    </location>
</feature>
<feature type="active site" description="Proton acceptor" evidence="1">
    <location>
        <position position="270"/>
    </location>
</feature>
<feature type="binding site" evidence="1">
    <location>
        <position position="153"/>
    </location>
    <ligand>
        <name>substrate</name>
    </ligand>
</feature>
<feature type="binding site" description="via carbamate group" evidence="1">
    <location>
        <position position="177"/>
    </location>
    <ligand>
        <name>Mg(2+)</name>
        <dbReference type="ChEBI" id="CHEBI:18420"/>
    </ligand>
</feature>
<feature type="binding site" evidence="1">
    <location>
        <position position="179"/>
    </location>
    <ligand>
        <name>Mg(2+)</name>
        <dbReference type="ChEBI" id="CHEBI:18420"/>
    </ligand>
</feature>
<feature type="binding site" evidence="1">
    <location>
        <position position="180"/>
    </location>
    <ligand>
        <name>Mg(2+)</name>
        <dbReference type="ChEBI" id="CHEBI:18420"/>
    </ligand>
</feature>
<feature type="binding site" evidence="1">
    <location>
        <position position="271"/>
    </location>
    <ligand>
        <name>substrate</name>
    </ligand>
</feature>
<feature type="binding site" evidence="1">
    <location>
        <position position="303"/>
    </location>
    <ligand>
        <name>substrate</name>
    </ligand>
</feature>
<feature type="binding site" evidence="1">
    <location>
        <begin position="354"/>
        <end position="356"/>
    </location>
    <ligand>
        <name>substrate</name>
    </ligand>
</feature>
<feature type="binding site" evidence="1">
    <location>
        <begin position="376"/>
        <end position="379"/>
    </location>
    <ligand>
        <name>substrate</name>
    </ligand>
</feature>
<feature type="site" description="Transition state stabilizer" evidence="1">
    <location>
        <position position="310"/>
    </location>
</feature>
<feature type="modified residue" description="N6-carboxylysine" evidence="1">
    <location>
        <position position="177"/>
    </location>
</feature>
<comment type="function">
    <text evidence="1">Catalyzes the addition of molecular CO(2) and H(2)O to ribulose 1,5-bisphosphate (RuBP), generating two molecules of 3-phosphoglycerate (3-PGA). Functions in an archaeal AMP degradation pathway, together with AMP phosphorylase and R15P isomerase.</text>
</comment>
<comment type="catalytic activity">
    <reaction evidence="1">
        <text>2 (2R)-3-phosphoglycerate + 2 H(+) = D-ribulose 1,5-bisphosphate + CO2 + H2O</text>
        <dbReference type="Rhea" id="RHEA:23124"/>
        <dbReference type="ChEBI" id="CHEBI:15377"/>
        <dbReference type="ChEBI" id="CHEBI:15378"/>
        <dbReference type="ChEBI" id="CHEBI:16526"/>
        <dbReference type="ChEBI" id="CHEBI:57870"/>
        <dbReference type="ChEBI" id="CHEBI:58272"/>
        <dbReference type="EC" id="4.1.1.39"/>
    </reaction>
</comment>
<comment type="catalytic activity">
    <reaction evidence="1">
        <text>D-ribulose 1,5-bisphosphate + O2 = 2-phosphoglycolate + (2R)-3-phosphoglycerate + 2 H(+)</text>
        <dbReference type="Rhea" id="RHEA:36631"/>
        <dbReference type="ChEBI" id="CHEBI:15378"/>
        <dbReference type="ChEBI" id="CHEBI:15379"/>
        <dbReference type="ChEBI" id="CHEBI:57870"/>
        <dbReference type="ChEBI" id="CHEBI:58033"/>
        <dbReference type="ChEBI" id="CHEBI:58272"/>
    </reaction>
</comment>
<comment type="cofactor">
    <cofactor evidence="1">
        <name>Mg(2+)</name>
        <dbReference type="ChEBI" id="CHEBI:18420"/>
    </cofactor>
    <text evidence="1">Binds 1 Mg(2+) ion per subunit.</text>
</comment>
<comment type="subunit">
    <text evidence="1">Homodimer or homodecamer. In contrast to form I RuBisCO, the form III RuBisCO is composed solely of large subunits.</text>
</comment>
<comment type="miscellaneous">
    <text evidence="1">Because the Archaea possessing a type III RuBisCO are all anaerobic, it is most likely that only the carboxylase activity of RuBisCO, and not the competitive oxygenase activity (by which RuBP reacts with O(2) to form one molecule of 3-phosphoglycerate and one molecule of 2-phosphoglycolate), is biologically relevant in these strains.</text>
</comment>
<comment type="similarity">
    <text evidence="1">Belongs to the RuBisCO large chain family. Type III subfamily.</text>
</comment>
<organism>
    <name type="scientific">Methanosarcina mazei (strain ATCC BAA-159 / DSM 3647 / Goe1 / Go1 / JCM 11833 / OCM 88)</name>
    <name type="common">Methanosarcina frisia</name>
    <dbReference type="NCBI Taxonomy" id="192952"/>
    <lineage>
        <taxon>Archaea</taxon>
        <taxon>Methanobacteriati</taxon>
        <taxon>Methanobacteriota</taxon>
        <taxon>Stenosarchaea group</taxon>
        <taxon>Methanomicrobia</taxon>
        <taxon>Methanosarcinales</taxon>
        <taxon>Methanosarcinaceae</taxon>
        <taxon>Methanosarcina</taxon>
    </lineage>
</organism>
<sequence>MRRDYIDIGYSPKETDLVCEFHIEPTAGVNFEEAATHLAGESSIDSWTEIATLSPELAEKLKPHVFYADEGAQTVRVAYSEELFELGSVPQVLSAVAGNILSMKIVDNVRLQDIAFPKSMINEFKGPNFGLPGIRKLVGVQDRPLIGTIVKPKVGLNSEKHAEVAYNSFVGGCDLVKDDENLSDQKFNSFEKRAELTLKLAEKAESETGEKKMYLCNVTAPTCREMIRRMNFLKDLGASYVMVDIVPAGWTAIQTLREEAEDAGLALHAHRCMHSAYTRNPRHGISMLVVAKLCRLIGLDQLHIGTVVGKMHGEKHEVLNLRDQCVLDKVPADESQHILAQDWRGLKPMFPVASGGLAPTMIPDLYSIFGKDVIMQFGGGIHAHPMGTVAGATACRQALEASLEGISLQDYAKNHKELETALGKWLKK</sequence>
<reference key="1">
    <citation type="journal article" date="2002" name="J. Mol. Microbiol. Biotechnol.">
        <title>The genome of Methanosarcina mazei: evidence for lateral gene transfer between Bacteria and Archaea.</title>
        <authorList>
            <person name="Deppenmeier U."/>
            <person name="Johann A."/>
            <person name="Hartsch T."/>
            <person name="Merkl R."/>
            <person name="Schmitz R.A."/>
            <person name="Martinez-Arias R."/>
            <person name="Henne A."/>
            <person name="Wiezer A."/>
            <person name="Baeumer S."/>
            <person name="Jacobi C."/>
            <person name="Brueggemann H."/>
            <person name="Lienard T."/>
            <person name="Christmann A."/>
            <person name="Boemecke M."/>
            <person name="Steckel S."/>
            <person name="Bhattacharyya A."/>
            <person name="Lykidis A."/>
            <person name="Overbeek R."/>
            <person name="Klenk H.-P."/>
            <person name="Gunsalus R.P."/>
            <person name="Fritz H.-J."/>
            <person name="Gottschalk G."/>
        </authorList>
    </citation>
    <scope>NUCLEOTIDE SEQUENCE [LARGE SCALE GENOMIC DNA]</scope>
    <source>
        <strain>ATCC BAA-159 / DSM 3647 / Goe1 / Go1 / JCM 11833 / OCM 88</strain>
    </source>
</reference>
<proteinExistence type="inferred from homology"/>
<keyword id="KW-0120">Carbon dioxide fixation</keyword>
<keyword id="KW-0456">Lyase</keyword>
<keyword id="KW-0460">Magnesium</keyword>
<keyword id="KW-0479">Metal-binding</keyword>
<keyword id="KW-0560">Oxidoreductase</keyword>
<evidence type="ECO:0000255" key="1">
    <source>
        <dbReference type="HAMAP-Rule" id="MF_01133"/>
    </source>
</evidence>